<sequence>MKKIVLVAGGTGGHFFPAVALGEELIKRKYEVHFITDLRCEKYINHDAGLIFHVIDLKRPKNILLFLPLLSLAIFKAIKLLFSLSPSAVVGFGGYPVVASMFAAIFLRVPIVIHEQNSYLGKVNRFFANFAKKIAISYKNTKNLPVVVKNRTVVTGGIVRKNIRGLDSVVKRRNDKDRTFKIFIFGGSQGAKLFSELIPESIKALMQKQPNLKLHITQQAALDDQVKIKNIYSNLNINYELAEFFDNMANQYKNTDLVISRAGASTIEELTYIGLPAIFIPLPSAADNHQYHNAKLLEDEKCGWCMKQDDISSEKLAEKIFELISNPKILENTSKNLLKRRKEGHKLLSNLIEELI</sequence>
<proteinExistence type="inferred from homology"/>
<reference key="1">
    <citation type="journal article" date="2006" name="PLoS Genet.">
        <title>Genome sequence of Rickettsia bellii illuminates the role of amoebae in gene exchanges between intracellular pathogens.</title>
        <authorList>
            <person name="Ogata H."/>
            <person name="La Scola B."/>
            <person name="Audic S."/>
            <person name="Renesto P."/>
            <person name="Blanc G."/>
            <person name="Robert C."/>
            <person name="Fournier P.-E."/>
            <person name="Claverie J.-M."/>
            <person name="Raoult D."/>
        </authorList>
    </citation>
    <scope>NUCLEOTIDE SEQUENCE [LARGE SCALE GENOMIC DNA]</scope>
    <source>
        <strain>RML369-C</strain>
    </source>
</reference>
<name>MURG_RICBR</name>
<gene>
    <name evidence="1" type="primary">murG</name>
    <name type="ordered locus">RBE_0878</name>
</gene>
<dbReference type="EC" id="2.4.1.227" evidence="1"/>
<dbReference type="EMBL" id="CP000087">
    <property type="protein sequence ID" value="ABE04959.1"/>
    <property type="molecule type" value="Genomic_DNA"/>
</dbReference>
<dbReference type="RefSeq" id="WP_011477544.1">
    <property type="nucleotide sequence ID" value="NC_007940.1"/>
</dbReference>
<dbReference type="SMR" id="Q1RI55"/>
<dbReference type="CAZy" id="GT28">
    <property type="family name" value="Glycosyltransferase Family 28"/>
</dbReference>
<dbReference type="KEGG" id="rbe:RBE_0878"/>
<dbReference type="eggNOG" id="COG0707">
    <property type="taxonomic scope" value="Bacteria"/>
</dbReference>
<dbReference type="HOGENOM" id="CLU_037404_2_1_5"/>
<dbReference type="OrthoDB" id="9808936at2"/>
<dbReference type="UniPathway" id="UPA00219"/>
<dbReference type="Proteomes" id="UP000001951">
    <property type="component" value="Chromosome"/>
</dbReference>
<dbReference type="GO" id="GO:0005886">
    <property type="term" value="C:plasma membrane"/>
    <property type="evidence" value="ECO:0007669"/>
    <property type="project" value="UniProtKB-SubCell"/>
</dbReference>
<dbReference type="GO" id="GO:0051991">
    <property type="term" value="F:UDP-N-acetyl-D-glucosamine:N-acetylmuramoyl-L-alanyl-D-glutamyl-meso-2,6-diaminopimelyl-D-alanyl-D-alanine-diphosphoundecaprenol 4-beta-N-acetylglucosaminlytransferase activity"/>
    <property type="evidence" value="ECO:0007669"/>
    <property type="project" value="RHEA"/>
</dbReference>
<dbReference type="GO" id="GO:0050511">
    <property type="term" value="F:undecaprenyldiphospho-muramoylpentapeptide beta-N-acetylglucosaminyltransferase activity"/>
    <property type="evidence" value="ECO:0007669"/>
    <property type="project" value="UniProtKB-UniRule"/>
</dbReference>
<dbReference type="GO" id="GO:0005975">
    <property type="term" value="P:carbohydrate metabolic process"/>
    <property type="evidence" value="ECO:0007669"/>
    <property type="project" value="InterPro"/>
</dbReference>
<dbReference type="GO" id="GO:0051301">
    <property type="term" value="P:cell division"/>
    <property type="evidence" value="ECO:0007669"/>
    <property type="project" value="UniProtKB-KW"/>
</dbReference>
<dbReference type="GO" id="GO:0071555">
    <property type="term" value="P:cell wall organization"/>
    <property type="evidence" value="ECO:0007669"/>
    <property type="project" value="UniProtKB-KW"/>
</dbReference>
<dbReference type="GO" id="GO:0030259">
    <property type="term" value="P:lipid glycosylation"/>
    <property type="evidence" value="ECO:0007669"/>
    <property type="project" value="UniProtKB-UniRule"/>
</dbReference>
<dbReference type="GO" id="GO:0009252">
    <property type="term" value="P:peptidoglycan biosynthetic process"/>
    <property type="evidence" value="ECO:0007669"/>
    <property type="project" value="UniProtKB-UniRule"/>
</dbReference>
<dbReference type="GO" id="GO:0008360">
    <property type="term" value="P:regulation of cell shape"/>
    <property type="evidence" value="ECO:0007669"/>
    <property type="project" value="UniProtKB-KW"/>
</dbReference>
<dbReference type="CDD" id="cd03785">
    <property type="entry name" value="GT28_MurG"/>
    <property type="match status" value="1"/>
</dbReference>
<dbReference type="Gene3D" id="3.40.50.2000">
    <property type="entry name" value="Glycogen Phosphorylase B"/>
    <property type="match status" value="2"/>
</dbReference>
<dbReference type="HAMAP" id="MF_00033">
    <property type="entry name" value="MurG"/>
    <property type="match status" value="1"/>
</dbReference>
<dbReference type="InterPro" id="IPR006009">
    <property type="entry name" value="GlcNAc_MurG"/>
</dbReference>
<dbReference type="InterPro" id="IPR007235">
    <property type="entry name" value="Glyco_trans_28_C"/>
</dbReference>
<dbReference type="InterPro" id="IPR004276">
    <property type="entry name" value="GlycoTrans_28_N"/>
</dbReference>
<dbReference type="NCBIfam" id="TIGR01133">
    <property type="entry name" value="murG"/>
    <property type="match status" value="1"/>
</dbReference>
<dbReference type="PANTHER" id="PTHR21015:SF22">
    <property type="entry name" value="GLYCOSYLTRANSFERASE"/>
    <property type="match status" value="1"/>
</dbReference>
<dbReference type="PANTHER" id="PTHR21015">
    <property type="entry name" value="UDP-N-ACETYLGLUCOSAMINE--N-ACETYLMURAMYL-(PENTAPEPTIDE) PYROPHOSPHORYL-UNDECAPRENOL N-ACETYLGLUCOSAMINE TRANSFERASE 1"/>
    <property type="match status" value="1"/>
</dbReference>
<dbReference type="Pfam" id="PF04101">
    <property type="entry name" value="Glyco_tran_28_C"/>
    <property type="match status" value="1"/>
</dbReference>
<dbReference type="Pfam" id="PF03033">
    <property type="entry name" value="Glyco_transf_28"/>
    <property type="match status" value="1"/>
</dbReference>
<dbReference type="SUPFAM" id="SSF53756">
    <property type="entry name" value="UDP-Glycosyltransferase/glycogen phosphorylase"/>
    <property type="match status" value="1"/>
</dbReference>
<comment type="function">
    <text evidence="1">Cell wall formation. Catalyzes the transfer of a GlcNAc subunit on undecaprenyl-pyrophosphoryl-MurNAc-pentapeptide (lipid intermediate I) to form undecaprenyl-pyrophosphoryl-MurNAc-(pentapeptide)GlcNAc (lipid intermediate II).</text>
</comment>
<comment type="catalytic activity">
    <reaction evidence="1">
        <text>di-trans,octa-cis-undecaprenyl diphospho-N-acetyl-alpha-D-muramoyl-L-alanyl-D-glutamyl-meso-2,6-diaminopimeloyl-D-alanyl-D-alanine + UDP-N-acetyl-alpha-D-glucosamine = di-trans,octa-cis-undecaprenyl diphospho-[N-acetyl-alpha-D-glucosaminyl-(1-&gt;4)]-N-acetyl-alpha-D-muramoyl-L-alanyl-D-glutamyl-meso-2,6-diaminopimeloyl-D-alanyl-D-alanine + UDP + H(+)</text>
        <dbReference type="Rhea" id="RHEA:31227"/>
        <dbReference type="ChEBI" id="CHEBI:15378"/>
        <dbReference type="ChEBI" id="CHEBI:57705"/>
        <dbReference type="ChEBI" id="CHEBI:58223"/>
        <dbReference type="ChEBI" id="CHEBI:61387"/>
        <dbReference type="ChEBI" id="CHEBI:61388"/>
        <dbReference type="EC" id="2.4.1.227"/>
    </reaction>
</comment>
<comment type="pathway">
    <text evidence="1">Cell wall biogenesis; peptidoglycan biosynthesis.</text>
</comment>
<comment type="subcellular location">
    <subcellularLocation>
        <location evidence="1">Cell inner membrane</location>
        <topology evidence="1">Peripheral membrane protein</topology>
        <orientation evidence="1">Cytoplasmic side</orientation>
    </subcellularLocation>
</comment>
<comment type="similarity">
    <text evidence="1">Belongs to the glycosyltransferase 28 family. MurG subfamily.</text>
</comment>
<keyword id="KW-0131">Cell cycle</keyword>
<keyword id="KW-0132">Cell division</keyword>
<keyword id="KW-0997">Cell inner membrane</keyword>
<keyword id="KW-1003">Cell membrane</keyword>
<keyword id="KW-0133">Cell shape</keyword>
<keyword id="KW-0961">Cell wall biogenesis/degradation</keyword>
<keyword id="KW-0328">Glycosyltransferase</keyword>
<keyword id="KW-0472">Membrane</keyword>
<keyword id="KW-0573">Peptidoglycan synthesis</keyword>
<keyword id="KW-0808">Transferase</keyword>
<protein>
    <recommendedName>
        <fullName evidence="1">UDP-N-acetylglucosamine--N-acetylmuramyl-(pentapeptide) pyrophosphoryl-undecaprenol N-acetylglucosamine transferase</fullName>
        <ecNumber evidence="1">2.4.1.227</ecNumber>
    </recommendedName>
    <alternativeName>
        <fullName evidence="1">Undecaprenyl-PP-MurNAc-pentapeptide-UDPGlcNAc GlcNAc transferase</fullName>
    </alternativeName>
</protein>
<feature type="chain" id="PRO_0000278070" description="UDP-N-acetylglucosamine--N-acetylmuramyl-(pentapeptide) pyrophosphoryl-undecaprenol N-acetylglucosamine transferase">
    <location>
        <begin position="1"/>
        <end position="356"/>
    </location>
</feature>
<feature type="binding site" evidence="1">
    <location>
        <begin position="11"/>
        <end position="13"/>
    </location>
    <ligand>
        <name>UDP-N-acetyl-alpha-D-glucosamine</name>
        <dbReference type="ChEBI" id="CHEBI:57705"/>
    </ligand>
</feature>
<feature type="binding site" evidence="1">
    <location>
        <position position="117"/>
    </location>
    <ligand>
        <name>UDP-N-acetyl-alpha-D-glucosamine</name>
        <dbReference type="ChEBI" id="CHEBI:57705"/>
    </ligand>
</feature>
<feature type="binding site" evidence="1">
    <location>
        <position position="160"/>
    </location>
    <ligand>
        <name>UDP-N-acetyl-alpha-D-glucosamine</name>
        <dbReference type="ChEBI" id="CHEBI:57705"/>
    </ligand>
</feature>
<feature type="binding site" evidence="1">
    <location>
        <position position="188"/>
    </location>
    <ligand>
        <name>UDP-N-acetyl-alpha-D-glucosamine</name>
        <dbReference type="ChEBI" id="CHEBI:57705"/>
    </ligand>
</feature>
<feature type="binding site" evidence="1">
    <location>
        <position position="290"/>
    </location>
    <ligand>
        <name>UDP-N-acetyl-alpha-D-glucosamine</name>
        <dbReference type="ChEBI" id="CHEBI:57705"/>
    </ligand>
</feature>
<organism>
    <name type="scientific">Rickettsia bellii (strain RML369-C)</name>
    <dbReference type="NCBI Taxonomy" id="336407"/>
    <lineage>
        <taxon>Bacteria</taxon>
        <taxon>Pseudomonadati</taxon>
        <taxon>Pseudomonadota</taxon>
        <taxon>Alphaproteobacteria</taxon>
        <taxon>Rickettsiales</taxon>
        <taxon>Rickettsiaceae</taxon>
        <taxon>Rickettsieae</taxon>
        <taxon>Rickettsia</taxon>
        <taxon>belli group</taxon>
    </lineage>
</organism>
<accession>Q1RI55</accession>
<evidence type="ECO:0000255" key="1">
    <source>
        <dbReference type="HAMAP-Rule" id="MF_00033"/>
    </source>
</evidence>